<comment type="subcellular location">
    <subcellularLocation>
        <location evidence="1">Cell membrane</location>
        <topology evidence="1">Multi-pass membrane protein</topology>
    </subcellularLocation>
</comment>
<comment type="similarity">
    <text evidence="1">Belongs to the UPF0391 family.</text>
</comment>
<feature type="chain" id="PRO_0000256737" description="UPF0391 membrane protein YtjA">
    <location>
        <begin position="1"/>
        <end position="53"/>
    </location>
</feature>
<feature type="transmembrane region" description="Helical" evidence="1">
    <location>
        <begin position="4"/>
        <end position="24"/>
    </location>
</feature>
<feature type="transmembrane region" description="Helical" evidence="1">
    <location>
        <begin position="30"/>
        <end position="48"/>
    </location>
</feature>
<protein>
    <recommendedName>
        <fullName evidence="1">UPF0391 membrane protein YtjA</fullName>
    </recommendedName>
</protein>
<gene>
    <name evidence="1" type="primary">ytjA</name>
    <name type="ordered locus">ECP_4760</name>
</gene>
<organism>
    <name type="scientific">Escherichia coli O6:K15:H31 (strain 536 / UPEC)</name>
    <dbReference type="NCBI Taxonomy" id="362663"/>
    <lineage>
        <taxon>Bacteria</taxon>
        <taxon>Pseudomonadati</taxon>
        <taxon>Pseudomonadota</taxon>
        <taxon>Gammaproteobacteria</taxon>
        <taxon>Enterobacterales</taxon>
        <taxon>Enterobacteriaceae</taxon>
        <taxon>Escherichia</taxon>
    </lineage>
</organism>
<keyword id="KW-1003">Cell membrane</keyword>
<keyword id="KW-0472">Membrane</keyword>
<keyword id="KW-0812">Transmembrane</keyword>
<keyword id="KW-1133">Transmembrane helix</keyword>
<sequence length="53" mass="5536">MFRWGIIFLVIALIAAALGFGGLAGTAAGAAKIVFVVGIILFLVSLFMGRKRP</sequence>
<name>YTJA_ECOL5</name>
<dbReference type="EMBL" id="CP000247">
    <property type="protein sequence ID" value="ABG72642.1"/>
    <property type="molecule type" value="Genomic_DNA"/>
</dbReference>
<dbReference type="RefSeq" id="WP_000490275.1">
    <property type="nucleotide sequence ID" value="NC_008253.1"/>
</dbReference>
<dbReference type="KEGG" id="ecp:ECP_4760"/>
<dbReference type="HOGENOM" id="CLU_187346_2_0_6"/>
<dbReference type="Proteomes" id="UP000009182">
    <property type="component" value="Chromosome"/>
</dbReference>
<dbReference type="GO" id="GO:0005886">
    <property type="term" value="C:plasma membrane"/>
    <property type="evidence" value="ECO:0007669"/>
    <property type="project" value="UniProtKB-SubCell"/>
</dbReference>
<dbReference type="HAMAP" id="MF_01361">
    <property type="entry name" value="UPF0391"/>
    <property type="match status" value="1"/>
</dbReference>
<dbReference type="InterPro" id="IPR009760">
    <property type="entry name" value="DUF1328"/>
</dbReference>
<dbReference type="NCBIfam" id="NF010229">
    <property type="entry name" value="PRK13682.1-4"/>
    <property type="match status" value="1"/>
</dbReference>
<dbReference type="NCBIfam" id="NF010230">
    <property type="entry name" value="PRK13682.1-5"/>
    <property type="match status" value="1"/>
</dbReference>
<dbReference type="Pfam" id="PF07043">
    <property type="entry name" value="DUF1328"/>
    <property type="match status" value="1"/>
</dbReference>
<dbReference type="PIRSF" id="PIRSF036466">
    <property type="entry name" value="UCP036466"/>
    <property type="match status" value="1"/>
</dbReference>
<evidence type="ECO:0000255" key="1">
    <source>
        <dbReference type="HAMAP-Rule" id="MF_01361"/>
    </source>
</evidence>
<proteinExistence type="inferred from homology"/>
<reference key="1">
    <citation type="journal article" date="2006" name="Mol. Microbiol.">
        <title>Role of pathogenicity island-associated integrases in the genome plasticity of uropathogenic Escherichia coli strain 536.</title>
        <authorList>
            <person name="Hochhut B."/>
            <person name="Wilde C."/>
            <person name="Balling G."/>
            <person name="Middendorf B."/>
            <person name="Dobrindt U."/>
            <person name="Brzuszkiewicz E."/>
            <person name="Gottschalk G."/>
            <person name="Carniel E."/>
            <person name="Hacker J."/>
        </authorList>
    </citation>
    <scope>NUCLEOTIDE SEQUENCE [LARGE SCALE GENOMIC DNA]</scope>
    <source>
        <strain>536 / UPEC</strain>
    </source>
</reference>
<accession>Q0T8T7</accession>